<reference key="1">
    <citation type="submission" date="2007-06" db="EMBL/GenBank/DDBJ databases">
        <title>Complete sequence of Methanococcus vannielii SB.</title>
        <authorList>
            <consortium name="US DOE Joint Genome Institute"/>
            <person name="Copeland A."/>
            <person name="Lucas S."/>
            <person name="Lapidus A."/>
            <person name="Barry K."/>
            <person name="Glavina del Rio T."/>
            <person name="Dalin E."/>
            <person name="Tice H."/>
            <person name="Pitluck S."/>
            <person name="Chain P."/>
            <person name="Malfatti S."/>
            <person name="Shin M."/>
            <person name="Vergez L."/>
            <person name="Schmutz J."/>
            <person name="Larimer F."/>
            <person name="Land M."/>
            <person name="Hauser L."/>
            <person name="Kyrpides N."/>
            <person name="Anderson I."/>
            <person name="Sieprawska-Lupa M."/>
            <person name="Whitman W.B."/>
            <person name="Richardson P."/>
        </authorList>
    </citation>
    <scope>NUCLEOTIDE SEQUENCE [LARGE SCALE GENOMIC DNA]</scope>
    <source>
        <strain>ATCC 35089 / DSM 1224 / JCM 13029 / OCM 148 / SB</strain>
    </source>
</reference>
<organism>
    <name type="scientific">Methanococcus vannielii (strain ATCC 35089 / DSM 1224 / JCM 13029 / OCM 148 / SB)</name>
    <dbReference type="NCBI Taxonomy" id="406327"/>
    <lineage>
        <taxon>Archaea</taxon>
        <taxon>Methanobacteriati</taxon>
        <taxon>Methanobacteriota</taxon>
        <taxon>Methanomada group</taxon>
        <taxon>Methanococci</taxon>
        <taxon>Methanococcales</taxon>
        <taxon>Methanococcaceae</taxon>
        <taxon>Methanococcus</taxon>
    </lineage>
</organism>
<feature type="chain" id="PRO_1000015694" description="Elongation factor 1-alpha">
    <location>
        <begin position="1"/>
        <end position="428"/>
    </location>
</feature>
<feature type="domain" description="tr-type G">
    <location>
        <begin position="5"/>
        <end position="225"/>
    </location>
</feature>
<feature type="region of interest" description="G1" evidence="1">
    <location>
        <begin position="14"/>
        <end position="21"/>
    </location>
</feature>
<feature type="region of interest" description="G2" evidence="1">
    <location>
        <begin position="70"/>
        <end position="74"/>
    </location>
</feature>
<feature type="region of interest" description="G3" evidence="1">
    <location>
        <begin position="91"/>
        <end position="94"/>
    </location>
</feature>
<feature type="region of interest" description="G4" evidence="1">
    <location>
        <begin position="149"/>
        <end position="152"/>
    </location>
</feature>
<feature type="region of interest" description="G5" evidence="1">
    <location>
        <begin position="189"/>
        <end position="191"/>
    </location>
</feature>
<feature type="binding site" evidence="2">
    <location>
        <begin position="14"/>
        <end position="21"/>
    </location>
    <ligand>
        <name>GTP</name>
        <dbReference type="ChEBI" id="CHEBI:37565"/>
    </ligand>
</feature>
<feature type="binding site" evidence="2">
    <location>
        <position position="21"/>
    </location>
    <ligand>
        <name>Mg(2+)</name>
        <dbReference type="ChEBI" id="CHEBI:18420"/>
    </ligand>
</feature>
<feature type="binding site" evidence="2">
    <location>
        <begin position="91"/>
        <end position="95"/>
    </location>
    <ligand>
        <name>GTP</name>
        <dbReference type="ChEBI" id="CHEBI:37565"/>
    </ligand>
</feature>
<feature type="binding site" evidence="2">
    <location>
        <begin position="149"/>
        <end position="152"/>
    </location>
    <ligand>
        <name>GTP</name>
        <dbReference type="ChEBI" id="CHEBI:37565"/>
    </ligand>
</feature>
<evidence type="ECO:0000250" key="1"/>
<evidence type="ECO:0000255" key="2">
    <source>
        <dbReference type="HAMAP-Rule" id="MF_00118"/>
    </source>
</evidence>
<gene>
    <name evidence="2" type="primary">tuf</name>
    <name type="ordered locus">Mevan_0680</name>
</gene>
<comment type="function">
    <text evidence="2">GTP hydrolase that promotes the GTP-dependent binding of aminoacyl-tRNA to the A-site of ribosomes during protein biosynthesis.</text>
</comment>
<comment type="catalytic activity">
    <reaction evidence="2">
        <text>GTP + H2O = GDP + phosphate + H(+)</text>
        <dbReference type="Rhea" id="RHEA:19669"/>
        <dbReference type="ChEBI" id="CHEBI:15377"/>
        <dbReference type="ChEBI" id="CHEBI:15378"/>
        <dbReference type="ChEBI" id="CHEBI:37565"/>
        <dbReference type="ChEBI" id="CHEBI:43474"/>
        <dbReference type="ChEBI" id="CHEBI:58189"/>
        <dbReference type="EC" id="3.6.5.3"/>
    </reaction>
    <physiologicalReaction direction="left-to-right" evidence="2">
        <dbReference type="Rhea" id="RHEA:19670"/>
    </physiologicalReaction>
</comment>
<comment type="subcellular location">
    <subcellularLocation>
        <location evidence="2">Cytoplasm</location>
    </subcellularLocation>
</comment>
<comment type="similarity">
    <text evidence="2">Belongs to the TRAFAC class translation factor GTPase superfamily. Classic translation factor GTPase family. EF-Tu/EF-1A subfamily.</text>
</comment>
<accession>A6UQ14</accession>
<proteinExistence type="inferred from homology"/>
<sequence length="428" mass="46503">MAKTKPILNVAFIGHVDAGKSTTVGRLLLDGGAIDPQLIVRLRKEAEEKGKAGFEFAYVMDGLKEERERGVTIDVAHKKFPTAKYEVTIVDCPGHRDFIKNMITGASQADAAVLVVNVDDAKSGIQPQTREHVFLIRTLGVRQLAVAVNKMDTVNFSEADYNELKKMIGDQLLKMIGFNPEQINFVPVASLHGDNVFKKSERTPWYKGPTIAEVIDGFQPPEKPTNLPLRLPIQDVYSITGVGTVPVGRVETGIIKPGDKVVFEPAGAIGEIKTVEMHHEQLPSAEPGDNIGFNVRGVGKKDIKRGDVLGHTTNPPTVATDFTAQIVVLQHPSVLTVGYTPVFHTHTAQIACTFAEIQKKLNPATGEVLEENPDFLKAGDAAIVKLIPTKPMVIESVKEIPQLGRFAIRDMGMTVAAGMAIQVTAKNK</sequence>
<keyword id="KW-0963">Cytoplasm</keyword>
<keyword id="KW-0251">Elongation factor</keyword>
<keyword id="KW-0342">GTP-binding</keyword>
<keyword id="KW-0378">Hydrolase</keyword>
<keyword id="KW-0460">Magnesium</keyword>
<keyword id="KW-0479">Metal-binding</keyword>
<keyword id="KW-0547">Nucleotide-binding</keyword>
<keyword id="KW-0648">Protein biosynthesis</keyword>
<dbReference type="EC" id="3.6.5.3" evidence="2"/>
<dbReference type="EMBL" id="CP000742">
    <property type="protein sequence ID" value="ABR54586.1"/>
    <property type="molecule type" value="Genomic_DNA"/>
</dbReference>
<dbReference type="RefSeq" id="WP_011972488.1">
    <property type="nucleotide sequence ID" value="NC_009634.1"/>
</dbReference>
<dbReference type="SMR" id="A6UQ14"/>
<dbReference type="STRING" id="406327.Mevan_0680"/>
<dbReference type="GeneID" id="5325022"/>
<dbReference type="KEGG" id="mvn:Mevan_0680"/>
<dbReference type="eggNOG" id="arCOG01561">
    <property type="taxonomic scope" value="Archaea"/>
</dbReference>
<dbReference type="HOGENOM" id="CLU_007265_3_5_2"/>
<dbReference type="OrthoDB" id="371718at2157"/>
<dbReference type="Proteomes" id="UP000001107">
    <property type="component" value="Chromosome"/>
</dbReference>
<dbReference type="GO" id="GO:0005737">
    <property type="term" value="C:cytoplasm"/>
    <property type="evidence" value="ECO:0007669"/>
    <property type="project" value="UniProtKB-SubCell"/>
</dbReference>
<dbReference type="GO" id="GO:0005525">
    <property type="term" value="F:GTP binding"/>
    <property type="evidence" value="ECO:0007669"/>
    <property type="project" value="UniProtKB-UniRule"/>
</dbReference>
<dbReference type="GO" id="GO:0003924">
    <property type="term" value="F:GTPase activity"/>
    <property type="evidence" value="ECO:0007669"/>
    <property type="project" value="InterPro"/>
</dbReference>
<dbReference type="GO" id="GO:0003746">
    <property type="term" value="F:translation elongation factor activity"/>
    <property type="evidence" value="ECO:0007669"/>
    <property type="project" value="UniProtKB-UniRule"/>
</dbReference>
<dbReference type="CDD" id="cd01883">
    <property type="entry name" value="EF1_alpha"/>
    <property type="match status" value="1"/>
</dbReference>
<dbReference type="CDD" id="cd03693">
    <property type="entry name" value="EF1_alpha_II"/>
    <property type="match status" value="1"/>
</dbReference>
<dbReference type="CDD" id="cd03705">
    <property type="entry name" value="EF1_alpha_III"/>
    <property type="match status" value="1"/>
</dbReference>
<dbReference type="FunFam" id="2.40.30.10:FF:000003">
    <property type="entry name" value="Elongation factor 1-alpha"/>
    <property type="match status" value="1"/>
</dbReference>
<dbReference type="FunFam" id="2.40.30.10:FF:000005">
    <property type="entry name" value="Elongation factor 1-alpha"/>
    <property type="match status" value="1"/>
</dbReference>
<dbReference type="Gene3D" id="3.40.50.300">
    <property type="entry name" value="P-loop containing nucleotide triphosphate hydrolases"/>
    <property type="match status" value="1"/>
</dbReference>
<dbReference type="Gene3D" id="2.40.30.10">
    <property type="entry name" value="Translation factors"/>
    <property type="match status" value="2"/>
</dbReference>
<dbReference type="HAMAP" id="MF_00118_A">
    <property type="entry name" value="EF_Tu_A"/>
    <property type="match status" value="1"/>
</dbReference>
<dbReference type="InterPro" id="IPR004161">
    <property type="entry name" value="EFTu-like_2"/>
</dbReference>
<dbReference type="InterPro" id="IPR029459">
    <property type="entry name" value="EFTU-type"/>
</dbReference>
<dbReference type="InterPro" id="IPR031157">
    <property type="entry name" value="G_TR_CS"/>
</dbReference>
<dbReference type="InterPro" id="IPR054696">
    <property type="entry name" value="GTP-eEF1A_C"/>
</dbReference>
<dbReference type="InterPro" id="IPR027417">
    <property type="entry name" value="P-loop_NTPase"/>
</dbReference>
<dbReference type="InterPro" id="IPR005225">
    <property type="entry name" value="Small_GTP-bd"/>
</dbReference>
<dbReference type="InterPro" id="IPR000795">
    <property type="entry name" value="T_Tr_GTP-bd_dom"/>
</dbReference>
<dbReference type="InterPro" id="IPR050100">
    <property type="entry name" value="TRAFAC_GTPase_members"/>
</dbReference>
<dbReference type="InterPro" id="IPR009000">
    <property type="entry name" value="Transl_B-barrel_sf"/>
</dbReference>
<dbReference type="InterPro" id="IPR009001">
    <property type="entry name" value="Transl_elong_EF1A/Init_IF2_C"/>
</dbReference>
<dbReference type="InterPro" id="IPR004539">
    <property type="entry name" value="Transl_elong_EF1A_euk/arc"/>
</dbReference>
<dbReference type="NCBIfam" id="TIGR00483">
    <property type="entry name" value="EF-1_alpha"/>
    <property type="match status" value="1"/>
</dbReference>
<dbReference type="NCBIfam" id="NF008969">
    <property type="entry name" value="PRK12317.1"/>
    <property type="match status" value="1"/>
</dbReference>
<dbReference type="NCBIfam" id="TIGR00231">
    <property type="entry name" value="small_GTP"/>
    <property type="match status" value="1"/>
</dbReference>
<dbReference type="PANTHER" id="PTHR23115">
    <property type="entry name" value="TRANSLATION FACTOR"/>
    <property type="match status" value="1"/>
</dbReference>
<dbReference type="Pfam" id="PF22594">
    <property type="entry name" value="GTP-eEF1A_C"/>
    <property type="match status" value="1"/>
</dbReference>
<dbReference type="Pfam" id="PF00009">
    <property type="entry name" value="GTP_EFTU"/>
    <property type="match status" value="1"/>
</dbReference>
<dbReference type="Pfam" id="PF03144">
    <property type="entry name" value="GTP_EFTU_D2"/>
    <property type="match status" value="1"/>
</dbReference>
<dbReference type="Pfam" id="PF14578">
    <property type="entry name" value="GTP_EFTU_D4"/>
    <property type="match status" value="1"/>
</dbReference>
<dbReference type="PRINTS" id="PR00315">
    <property type="entry name" value="ELONGATNFCT"/>
</dbReference>
<dbReference type="SUPFAM" id="SSF50465">
    <property type="entry name" value="EF-Tu/eEF-1alpha/eIF2-gamma C-terminal domain"/>
    <property type="match status" value="1"/>
</dbReference>
<dbReference type="SUPFAM" id="SSF52540">
    <property type="entry name" value="P-loop containing nucleoside triphosphate hydrolases"/>
    <property type="match status" value="1"/>
</dbReference>
<dbReference type="SUPFAM" id="SSF50447">
    <property type="entry name" value="Translation proteins"/>
    <property type="match status" value="1"/>
</dbReference>
<dbReference type="PROSITE" id="PS00301">
    <property type="entry name" value="G_TR_1"/>
    <property type="match status" value="1"/>
</dbReference>
<dbReference type="PROSITE" id="PS51722">
    <property type="entry name" value="G_TR_2"/>
    <property type="match status" value="1"/>
</dbReference>
<name>EF1A_METVS</name>
<protein>
    <recommendedName>
        <fullName evidence="2">Elongation factor 1-alpha</fullName>
        <shortName evidence="2">EF-1-alpha</shortName>
        <ecNumber evidence="2">3.6.5.3</ecNumber>
    </recommendedName>
    <alternativeName>
        <fullName evidence="2">Elongation factor Tu</fullName>
        <shortName evidence="2">EF-Tu</shortName>
    </alternativeName>
</protein>